<proteinExistence type="evidence at transcript level"/>
<gene>
    <name type="primary">snap25a</name>
    <name type="synonym">snap25.1</name>
</gene>
<keyword id="KW-1003">Cell membrane</keyword>
<keyword id="KW-0175">Coiled coil</keyword>
<keyword id="KW-0472">Membrane</keyword>
<keyword id="KW-1185">Reference proteome</keyword>
<keyword id="KW-0677">Repeat</keyword>
<keyword id="KW-0770">Synapse</keyword>
<keyword id="KW-0771">Synaptosome</keyword>
<reference key="1">
    <citation type="journal article" date="1993" name="Proc. Natl. Acad. Sci. U.S.A.">
        <title>Multiple loci for synapse protein SNAP-25 in the tetraploid goldfish.</title>
        <authorList>
            <person name="Risinger C."/>
            <person name="Larhammar D."/>
        </authorList>
    </citation>
    <scope>NUCLEOTIDE SEQUENCE [MRNA]</scope>
    <source>
        <tissue>Retina</tissue>
    </source>
</reference>
<reference key="2">
    <citation type="journal article" date="1998" name="J. Neurosci. Res.">
        <title>Cloning of two loci for synapse protein Snap25 in zebrafish: comparison of paralogous linkage groups suggests loss of one locus in the mammalian lineage.</title>
        <authorList>
            <person name="Risinger C."/>
            <person name="Salaneck E."/>
            <person name="Soederberg C."/>
            <person name="Gates M."/>
            <person name="Postlethwait J.H."/>
            <person name="Larhammar D."/>
        </authorList>
    </citation>
    <scope>NOMENCLATURE</scope>
</reference>
<dbReference type="EMBL" id="L22973">
    <property type="protein sequence ID" value="AAA16537.1"/>
    <property type="molecule type" value="mRNA"/>
</dbReference>
<dbReference type="PIR" id="I50480">
    <property type="entry name" value="I50480"/>
</dbReference>
<dbReference type="BMRB" id="P36977"/>
<dbReference type="SMR" id="P36977"/>
<dbReference type="OrthoDB" id="19261at2759"/>
<dbReference type="Proteomes" id="UP000515129">
    <property type="component" value="Unplaced"/>
</dbReference>
<dbReference type="GO" id="GO:0005737">
    <property type="term" value="C:cytoplasm"/>
    <property type="evidence" value="ECO:0000250"/>
    <property type="project" value="UniProtKB"/>
</dbReference>
<dbReference type="GO" id="GO:0016020">
    <property type="term" value="C:membrane"/>
    <property type="evidence" value="ECO:0000250"/>
    <property type="project" value="UniProtKB"/>
</dbReference>
<dbReference type="GO" id="GO:0043005">
    <property type="term" value="C:neuron projection"/>
    <property type="evidence" value="ECO:0007669"/>
    <property type="project" value="UniProtKB-KW"/>
</dbReference>
<dbReference type="GO" id="GO:0005886">
    <property type="term" value="C:plasma membrane"/>
    <property type="evidence" value="ECO:0007669"/>
    <property type="project" value="UniProtKB-SubCell"/>
</dbReference>
<dbReference type="GO" id="GO:0098793">
    <property type="term" value="C:presynapse"/>
    <property type="evidence" value="ECO:0007669"/>
    <property type="project" value="GOC"/>
</dbReference>
<dbReference type="GO" id="GO:0031201">
    <property type="term" value="C:SNARE complex"/>
    <property type="evidence" value="ECO:0000250"/>
    <property type="project" value="UniProtKB"/>
</dbReference>
<dbReference type="GO" id="GO:0070032">
    <property type="term" value="C:synaptobrevin 2-SNAP-25-syntaxin-1a-complexin I complex"/>
    <property type="evidence" value="ECO:0007669"/>
    <property type="project" value="TreeGrafter"/>
</dbReference>
<dbReference type="GO" id="GO:0005484">
    <property type="term" value="F:SNAP receptor activity"/>
    <property type="evidence" value="ECO:0007669"/>
    <property type="project" value="TreeGrafter"/>
</dbReference>
<dbReference type="GO" id="GO:0017075">
    <property type="term" value="F:syntaxin-1 binding"/>
    <property type="evidence" value="ECO:0007669"/>
    <property type="project" value="InterPro"/>
</dbReference>
<dbReference type="GO" id="GO:0005249">
    <property type="term" value="F:voltage-gated potassium channel activity"/>
    <property type="evidence" value="ECO:0007669"/>
    <property type="project" value="InterPro"/>
</dbReference>
<dbReference type="GO" id="GO:0031629">
    <property type="term" value="P:synaptic vesicle fusion to presynaptic active zone membrane"/>
    <property type="evidence" value="ECO:0007669"/>
    <property type="project" value="TreeGrafter"/>
</dbReference>
<dbReference type="GO" id="GO:0016082">
    <property type="term" value="P:synaptic vesicle priming"/>
    <property type="evidence" value="ECO:0007669"/>
    <property type="project" value="TreeGrafter"/>
</dbReference>
<dbReference type="CDD" id="cd15885">
    <property type="entry name" value="SNARE_SNAP25C"/>
    <property type="match status" value="1"/>
</dbReference>
<dbReference type="CDD" id="cd15894">
    <property type="entry name" value="SNARE_SNAP25N"/>
    <property type="match status" value="1"/>
</dbReference>
<dbReference type="FunFam" id="1.20.5.110:FF:000007">
    <property type="entry name" value="Synaptosomal-associated protein"/>
    <property type="match status" value="1"/>
</dbReference>
<dbReference type="FunFam" id="1.20.5.110:FF:000009">
    <property type="entry name" value="Synaptosomal-associated protein"/>
    <property type="match status" value="1"/>
</dbReference>
<dbReference type="Gene3D" id="1.20.5.110">
    <property type="match status" value="2"/>
</dbReference>
<dbReference type="InterPro" id="IPR000928">
    <property type="entry name" value="SNAP-25_dom"/>
</dbReference>
<dbReference type="InterPro" id="IPR039077">
    <property type="entry name" value="SNAP-25_N_SNARE_chord"/>
</dbReference>
<dbReference type="InterPro" id="IPR000727">
    <property type="entry name" value="T_SNARE_dom"/>
</dbReference>
<dbReference type="PANTHER" id="PTHR19305">
    <property type="entry name" value="SYNAPTOSOMAL ASSOCIATED PROTEIN"/>
    <property type="match status" value="1"/>
</dbReference>
<dbReference type="PANTHER" id="PTHR19305:SF5">
    <property type="entry name" value="SYNAPTOSOMAL-ASSOCIATED PROTEIN 25"/>
    <property type="match status" value="1"/>
</dbReference>
<dbReference type="Pfam" id="PF00835">
    <property type="entry name" value="SNAP-25"/>
    <property type="match status" value="1"/>
</dbReference>
<dbReference type="SMART" id="SM00397">
    <property type="entry name" value="t_SNARE"/>
    <property type="match status" value="2"/>
</dbReference>
<dbReference type="SUPFAM" id="SSF58038">
    <property type="entry name" value="SNARE fusion complex"/>
    <property type="match status" value="2"/>
</dbReference>
<dbReference type="PROSITE" id="PS50192">
    <property type="entry name" value="T_SNARE"/>
    <property type="match status" value="2"/>
</dbReference>
<comment type="function">
    <text>May play an important role in the synaptic function of specific neuronal systems. Associates with proteins involved in vesicle docking and membrane fusion.</text>
</comment>
<comment type="subcellular location">
    <subcellularLocation>
        <location evidence="1">Synapse</location>
        <location evidence="1">Synaptosome</location>
    </subcellularLocation>
    <subcellularLocation>
        <location evidence="2">Cell membrane</location>
    </subcellularLocation>
    <text>Complexed with macromolecular elements of the nerve terminal.</text>
</comment>
<comment type="similarity">
    <text evidence="5">Belongs to the SNAP-25 family.</text>
</comment>
<name>SN25A_CARAU</name>
<feature type="chain" id="PRO_0000213596" description="Synaptosomal-associated protein 25-A">
    <location>
        <begin position="1"/>
        <end position="204"/>
    </location>
</feature>
<feature type="domain" description="t-SNARE coiled-coil homology 1" evidence="3">
    <location>
        <begin position="19"/>
        <end position="81"/>
    </location>
</feature>
<feature type="domain" description="t-SNARE coiled-coil homology 2" evidence="3">
    <location>
        <begin position="138"/>
        <end position="200"/>
    </location>
</feature>
<feature type="region of interest" description="Disordered" evidence="4">
    <location>
        <begin position="1"/>
        <end position="25"/>
    </location>
</feature>
<feature type="compositionally biased region" description="Basic and acidic residues" evidence="4">
    <location>
        <begin position="1"/>
        <end position="11"/>
    </location>
</feature>
<sequence>MAEDADMRNELSDMQQRADQLADESLESTRRMLQLVEESKDAGIRTLVMLDEQGEQLERIEEGMDQINKDMKDAEKNLNDLGKFCGLCSCPCNKMKSGGSKAWGNNQDGVVASQPARVVDEREQMAISGGFIRRVTDDARENEMDENLEQVGGIIGNLRHMALDMGNEIDTQNRQIDRIMEKADSNKTRIDEANQRATKMLGSG</sequence>
<protein>
    <recommendedName>
        <fullName>Synaptosomal-associated protein 25-A</fullName>
        <shortName>SNAP-25A</shortName>
    </recommendedName>
    <alternativeName>
        <fullName>Synaptosome-associated protein 25.1</fullName>
        <shortName>SNAP-25.1</shortName>
    </alternativeName>
</protein>
<accession>P36977</accession>
<organism>
    <name type="scientific">Carassius auratus</name>
    <name type="common">Goldfish</name>
    <dbReference type="NCBI Taxonomy" id="7957"/>
    <lineage>
        <taxon>Eukaryota</taxon>
        <taxon>Metazoa</taxon>
        <taxon>Chordata</taxon>
        <taxon>Craniata</taxon>
        <taxon>Vertebrata</taxon>
        <taxon>Euteleostomi</taxon>
        <taxon>Actinopterygii</taxon>
        <taxon>Neopterygii</taxon>
        <taxon>Teleostei</taxon>
        <taxon>Ostariophysi</taxon>
        <taxon>Cypriniformes</taxon>
        <taxon>Cyprinidae</taxon>
        <taxon>Cyprininae</taxon>
        <taxon>Carassius</taxon>
    </lineage>
</organism>
<evidence type="ECO:0000250" key="1"/>
<evidence type="ECO:0000250" key="2">
    <source>
        <dbReference type="UniProtKB" id="P60881"/>
    </source>
</evidence>
<evidence type="ECO:0000255" key="3">
    <source>
        <dbReference type="PROSITE-ProRule" id="PRU00202"/>
    </source>
</evidence>
<evidence type="ECO:0000256" key="4">
    <source>
        <dbReference type="SAM" id="MobiDB-lite"/>
    </source>
</evidence>
<evidence type="ECO:0000305" key="5"/>